<protein>
    <recommendedName>
        <fullName evidence="1">Ribose-5-phosphate isomerase A</fullName>
        <ecNumber evidence="1">5.3.1.6</ecNumber>
    </recommendedName>
    <alternativeName>
        <fullName evidence="1">Phosphoriboisomerase A</fullName>
        <shortName evidence="1">PRI</shortName>
    </alternativeName>
</protein>
<reference key="1">
    <citation type="journal article" date="2000" name="Nature">
        <title>The genome sequence of the plant pathogen Xylella fastidiosa.</title>
        <authorList>
            <person name="Simpson A.J.G."/>
            <person name="Reinach F.C."/>
            <person name="Arruda P."/>
            <person name="Abreu F.A."/>
            <person name="Acencio M."/>
            <person name="Alvarenga R."/>
            <person name="Alves L.M.C."/>
            <person name="Araya J.E."/>
            <person name="Baia G.S."/>
            <person name="Baptista C.S."/>
            <person name="Barros M.H."/>
            <person name="Bonaccorsi E.D."/>
            <person name="Bordin S."/>
            <person name="Bove J.M."/>
            <person name="Briones M.R.S."/>
            <person name="Bueno M.R.P."/>
            <person name="Camargo A.A."/>
            <person name="Camargo L.E.A."/>
            <person name="Carraro D.M."/>
            <person name="Carrer H."/>
            <person name="Colauto N.B."/>
            <person name="Colombo C."/>
            <person name="Costa F.F."/>
            <person name="Costa M.C.R."/>
            <person name="Costa-Neto C.M."/>
            <person name="Coutinho L.L."/>
            <person name="Cristofani M."/>
            <person name="Dias-Neto E."/>
            <person name="Docena C."/>
            <person name="El-Dorry H."/>
            <person name="Facincani A.P."/>
            <person name="Ferreira A.J.S."/>
            <person name="Ferreira V.C.A."/>
            <person name="Ferro J.A."/>
            <person name="Fraga J.S."/>
            <person name="Franca S.C."/>
            <person name="Franco M.C."/>
            <person name="Frohme M."/>
            <person name="Furlan L.R."/>
            <person name="Garnier M."/>
            <person name="Goldman G.H."/>
            <person name="Goldman M.H.S."/>
            <person name="Gomes S.L."/>
            <person name="Gruber A."/>
            <person name="Ho P.L."/>
            <person name="Hoheisel J.D."/>
            <person name="Junqueira M.L."/>
            <person name="Kemper E.L."/>
            <person name="Kitajima J.P."/>
            <person name="Krieger J.E."/>
            <person name="Kuramae E.E."/>
            <person name="Laigret F."/>
            <person name="Lambais M.R."/>
            <person name="Leite L.C.C."/>
            <person name="Lemos E.G.M."/>
            <person name="Lemos M.V.F."/>
            <person name="Lopes S.A."/>
            <person name="Lopes C.R."/>
            <person name="Machado J.A."/>
            <person name="Machado M.A."/>
            <person name="Madeira A.M.B.N."/>
            <person name="Madeira H.M.F."/>
            <person name="Marino C.L."/>
            <person name="Marques M.V."/>
            <person name="Martins E.A.L."/>
            <person name="Martins E.M.F."/>
            <person name="Matsukuma A.Y."/>
            <person name="Menck C.F.M."/>
            <person name="Miracca E.C."/>
            <person name="Miyaki C.Y."/>
            <person name="Monteiro-Vitorello C.B."/>
            <person name="Moon D.H."/>
            <person name="Nagai M.A."/>
            <person name="Nascimento A.L.T.O."/>
            <person name="Netto L.E.S."/>
            <person name="Nhani A. Jr."/>
            <person name="Nobrega F.G."/>
            <person name="Nunes L.R."/>
            <person name="Oliveira M.A."/>
            <person name="de Oliveira M.C."/>
            <person name="de Oliveira R.C."/>
            <person name="Palmieri D.A."/>
            <person name="Paris A."/>
            <person name="Peixoto B.R."/>
            <person name="Pereira G.A.G."/>
            <person name="Pereira H.A. Jr."/>
            <person name="Pesquero J.B."/>
            <person name="Quaggio R.B."/>
            <person name="Roberto P.G."/>
            <person name="Rodrigues V."/>
            <person name="de Rosa A.J.M."/>
            <person name="de Rosa V.E. Jr."/>
            <person name="de Sa R.G."/>
            <person name="Santelli R.V."/>
            <person name="Sawasaki H.E."/>
            <person name="da Silva A.C.R."/>
            <person name="da Silva A.M."/>
            <person name="da Silva F.R."/>
            <person name="Silva W.A. Jr."/>
            <person name="da Silveira J.F."/>
            <person name="Silvestri M.L.Z."/>
            <person name="Siqueira W.J."/>
            <person name="de Souza A.A."/>
            <person name="de Souza A.P."/>
            <person name="Terenzi M.F."/>
            <person name="Truffi D."/>
            <person name="Tsai S.M."/>
            <person name="Tsuhako M.H."/>
            <person name="Vallada H."/>
            <person name="Van Sluys M.A."/>
            <person name="Verjovski-Almeida S."/>
            <person name="Vettore A.L."/>
            <person name="Zago M.A."/>
            <person name="Zatz M."/>
            <person name="Meidanis J."/>
            <person name="Setubal J.C."/>
        </authorList>
    </citation>
    <scope>NUCLEOTIDE SEQUENCE [LARGE SCALE GENOMIC DNA]</scope>
    <source>
        <strain>9a5c</strain>
    </source>
</reference>
<organism>
    <name type="scientific">Xylella fastidiosa (strain 9a5c)</name>
    <dbReference type="NCBI Taxonomy" id="160492"/>
    <lineage>
        <taxon>Bacteria</taxon>
        <taxon>Pseudomonadati</taxon>
        <taxon>Pseudomonadota</taxon>
        <taxon>Gammaproteobacteria</taxon>
        <taxon>Lysobacterales</taxon>
        <taxon>Lysobacteraceae</taxon>
        <taxon>Xylella</taxon>
    </lineage>
</organism>
<proteinExistence type="inferred from homology"/>
<sequence length="215" mass="23418">MSEAKRRAAEKAIEYVENDMIIGVGTGSTVAYFIDALGRTPKRIKGAVSSSEQSTAHLKQHGIEVLELNHTGTLPLYVDGADECDPYKRLIKGGGASLTREKIIAEASKQFICIIDPNKQVATLGKLPLPIEVIPMARSLVARQIMARTDGQPVWREGVITDNGNVILDVHHLRITDPVKLEQELNQIPGVVCVGLFARRCADLVIIGSEPPHIL</sequence>
<keyword id="KW-0413">Isomerase</keyword>
<accession>Q9PBX0</accession>
<comment type="function">
    <text evidence="1">Catalyzes the reversible conversion of ribose-5-phosphate to ribulose 5-phosphate.</text>
</comment>
<comment type="catalytic activity">
    <reaction evidence="1">
        <text>aldehydo-D-ribose 5-phosphate = D-ribulose 5-phosphate</text>
        <dbReference type="Rhea" id="RHEA:14657"/>
        <dbReference type="ChEBI" id="CHEBI:58121"/>
        <dbReference type="ChEBI" id="CHEBI:58273"/>
        <dbReference type="EC" id="5.3.1.6"/>
    </reaction>
</comment>
<comment type="pathway">
    <text evidence="1">Carbohydrate degradation; pentose phosphate pathway; D-ribose 5-phosphate from D-ribulose 5-phosphate (non-oxidative stage): step 1/1.</text>
</comment>
<comment type="subunit">
    <text evidence="1">Homodimer.</text>
</comment>
<comment type="similarity">
    <text evidence="1">Belongs to the ribose 5-phosphate isomerase family.</text>
</comment>
<comment type="sequence caution" evidence="2">
    <conflict type="erroneous initiation">
        <sequence resource="EMBL-CDS" id="AAF84817"/>
    </conflict>
</comment>
<dbReference type="EC" id="5.3.1.6" evidence="1"/>
<dbReference type="EMBL" id="AE003849">
    <property type="protein sequence ID" value="AAF84817.1"/>
    <property type="status" value="ALT_INIT"/>
    <property type="molecule type" value="Genomic_DNA"/>
</dbReference>
<dbReference type="PIR" id="D82610">
    <property type="entry name" value="D82610"/>
</dbReference>
<dbReference type="RefSeq" id="WP_010894472.1">
    <property type="nucleotide sequence ID" value="NC_002488.3"/>
</dbReference>
<dbReference type="SMR" id="Q9PBX0"/>
<dbReference type="STRING" id="160492.XF_2015"/>
<dbReference type="KEGG" id="xfa:XF_2015"/>
<dbReference type="eggNOG" id="COG0120">
    <property type="taxonomic scope" value="Bacteria"/>
</dbReference>
<dbReference type="HOGENOM" id="CLU_056590_1_1_6"/>
<dbReference type="UniPathway" id="UPA00115">
    <property type="reaction ID" value="UER00412"/>
</dbReference>
<dbReference type="Proteomes" id="UP000000812">
    <property type="component" value="Chromosome"/>
</dbReference>
<dbReference type="GO" id="GO:0005829">
    <property type="term" value="C:cytosol"/>
    <property type="evidence" value="ECO:0007669"/>
    <property type="project" value="TreeGrafter"/>
</dbReference>
<dbReference type="GO" id="GO:0004751">
    <property type="term" value="F:ribose-5-phosphate isomerase activity"/>
    <property type="evidence" value="ECO:0007669"/>
    <property type="project" value="UniProtKB-UniRule"/>
</dbReference>
<dbReference type="GO" id="GO:0006014">
    <property type="term" value="P:D-ribose metabolic process"/>
    <property type="evidence" value="ECO:0007669"/>
    <property type="project" value="TreeGrafter"/>
</dbReference>
<dbReference type="GO" id="GO:0009052">
    <property type="term" value="P:pentose-phosphate shunt, non-oxidative branch"/>
    <property type="evidence" value="ECO:0007669"/>
    <property type="project" value="UniProtKB-UniRule"/>
</dbReference>
<dbReference type="CDD" id="cd01398">
    <property type="entry name" value="RPI_A"/>
    <property type="match status" value="1"/>
</dbReference>
<dbReference type="FunFam" id="3.30.70.260:FF:000004">
    <property type="entry name" value="Ribose-5-phosphate isomerase A"/>
    <property type="match status" value="1"/>
</dbReference>
<dbReference type="FunFam" id="3.40.50.1360:FF:000001">
    <property type="entry name" value="Ribose-5-phosphate isomerase A"/>
    <property type="match status" value="1"/>
</dbReference>
<dbReference type="Gene3D" id="3.30.70.260">
    <property type="match status" value="1"/>
</dbReference>
<dbReference type="Gene3D" id="3.40.50.1360">
    <property type="match status" value="1"/>
</dbReference>
<dbReference type="HAMAP" id="MF_00170">
    <property type="entry name" value="Rib_5P_isom_A"/>
    <property type="match status" value="1"/>
</dbReference>
<dbReference type="InterPro" id="IPR037171">
    <property type="entry name" value="NagB/RpiA_transferase-like"/>
</dbReference>
<dbReference type="InterPro" id="IPR020672">
    <property type="entry name" value="Ribose5P_isomerase_typA_subgr"/>
</dbReference>
<dbReference type="InterPro" id="IPR004788">
    <property type="entry name" value="Ribose5P_isomerase_type_A"/>
</dbReference>
<dbReference type="NCBIfam" id="NF001924">
    <property type="entry name" value="PRK00702.1"/>
    <property type="match status" value="1"/>
</dbReference>
<dbReference type="NCBIfam" id="TIGR00021">
    <property type="entry name" value="rpiA"/>
    <property type="match status" value="1"/>
</dbReference>
<dbReference type="PANTHER" id="PTHR11934">
    <property type="entry name" value="RIBOSE-5-PHOSPHATE ISOMERASE"/>
    <property type="match status" value="1"/>
</dbReference>
<dbReference type="PANTHER" id="PTHR11934:SF0">
    <property type="entry name" value="RIBOSE-5-PHOSPHATE ISOMERASE"/>
    <property type="match status" value="1"/>
</dbReference>
<dbReference type="Pfam" id="PF06026">
    <property type="entry name" value="Rib_5-P_isom_A"/>
    <property type="match status" value="1"/>
</dbReference>
<dbReference type="SUPFAM" id="SSF75445">
    <property type="entry name" value="D-ribose-5-phosphate isomerase (RpiA), lid domain"/>
    <property type="match status" value="1"/>
</dbReference>
<dbReference type="SUPFAM" id="SSF100950">
    <property type="entry name" value="NagB/RpiA/CoA transferase-like"/>
    <property type="match status" value="1"/>
</dbReference>
<evidence type="ECO:0000255" key="1">
    <source>
        <dbReference type="HAMAP-Rule" id="MF_00170"/>
    </source>
</evidence>
<evidence type="ECO:0000305" key="2"/>
<gene>
    <name evidence="1" type="primary">rpiA</name>
    <name type="ordered locus">XF_2015</name>
</gene>
<name>RPIA_XYLFA</name>
<feature type="chain" id="PRO_0000158499" description="Ribose-5-phosphate isomerase A">
    <location>
        <begin position="1"/>
        <end position="215"/>
    </location>
</feature>
<feature type="active site" description="Proton acceptor" evidence="1">
    <location>
        <position position="101"/>
    </location>
</feature>
<feature type="binding site" evidence="1">
    <location>
        <begin position="26"/>
        <end position="29"/>
    </location>
    <ligand>
        <name>substrate</name>
    </ligand>
</feature>
<feature type="binding site" evidence="1">
    <location>
        <begin position="79"/>
        <end position="82"/>
    </location>
    <ligand>
        <name>substrate</name>
    </ligand>
</feature>
<feature type="binding site" evidence="1">
    <location>
        <begin position="92"/>
        <end position="95"/>
    </location>
    <ligand>
        <name>substrate</name>
    </ligand>
</feature>
<feature type="binding site" evidence="1">
    <location>
        <position position="119"/>
    </location>
    <ligand>
        <name>substrate</name>
    </ligand>
</feature>